<organism>
    <name type="scientific">Salmonella typhi</name>
    <dbReference type="NCBI Taxonomy" id="90370"/>
    <lineage>
        <taxon>Bacteria</taxon>
        <taxon>Pseudomonadati</taxon>
        <taxon>Pseudomonadota</taxon>
        <taxon>Gammaproteobacteria</taxon>
        <taxon>Enterobacterales</taxon>
        <taxon>Enterobacteriaceae</taxon>
        <taxon>Salmonella</taxon>
    </lineage>
</organism>
<keyword id="KW-0998">Cell outer membrane</keyword>
<keyword id="KW-0449">Lipoprotein</keyword>
<keyword id="KW-0472">Membrane</keyword>
<keyword id="KW-0564">Palmitate</keyword>
<keyword id="KW-0732">Signal</keyword>
<protein>
    <recommendedName>
        <fullName evidence="1">LPS-assembly lipoprotein LptM</fullName>
    </recommendedName>
</protein>
<evidence type="ECO:0000250" key="1">
    <source>
        <dbReference type="UniProtKB" id="P0ADN6"/>
    </source>
</evidence>
<evidence type="ECO:0000255" key="2">
    <source>
        <dbReference type="PROSITE-ProRule" id="PRU00303"/>
    </source>
</evidence>
<evidence type="ECO:0000256" key="3">
    <source>
        <dbReference type="SAM" id="MobiDB-lite"/>
    </source>
</evidence>
<evidence type="ECO:0000305" key="4"/>
<reference key="1">
    <citation type="journal article" date="2001" name="Nature">
        <title>Complete genome sequence of a multiple drug resistant Salmonella enterica serovar Typhi CT18.</title>
        <authorList>
            <person name="Parkhill J."/>
            <person name="Dougan G."/>
            <person name="James K.D."/>
            <person name="Thomson N.R."/>
            <person name="Pickard D."/>
            <person name="Wain J."/>
            <person name="Churcher C.M."/>
            <person name="Mungall K.L."/>
            <person name="Bentley S.D."/>
            <person name="Holden M.T.G."/>
            <person name="Sebaihia M."/>
            <person name="Baker S."/>
            <person name="Basham D."/>
            <person name="Brooks K."/>
            <person name="Chillingworth T."/>
            <person name="Connerton P."/>
            <person name="Cronin A."/>
            <person name="Davis P."/>
            <person name="Davies R.M."/>
            <person name="Dowd L."/>
            <person name="White N."/>
            <person name="Farrar J."/>
            <person name="Feltwell T."/>
            <person name="Hamlin N."/>
            <person name="Haque A."/>
            <person name="Hien T.T."/>
            <person name="Holroyd S."/>
            <person name="Jagels K."/>
            <person name="Krogh A."/>
            <person name="Larsen T.S."/>
            <person name="Leather S."/>
            <person name="Moule S."/>
            <person name="O'Gaora P."/>
            <person name="Parry C."/>
            <person name="Quail M.A."/>
            <person name="Rutherford K.M."/>
            <person name="Simmonds M."/>
            <person name="Skelton J."/>
            <person name="Stevens K."/>
            <person name="Whitehead S."/>
            <person name="Barrell B.G."/>
        </authorList>
    </citation>
    <scope>NUCLEOTIDE SEQUENCE [LARGE SCALE GENOMIC DNA]</scope>
    <source>
        <strain>CT18</strain>
    </source>
</reference>
<reference key="2">
    <citation type="journal article" date="2003" name="J. Bacteriol.">
        <title>Comparative genomics of Salmonella enterica serovar Typhi strains Ty2 and CT18.</title>
        <authorList>
            <person name="Deng W."/>
            <person name="Liou S.-R."/>
            <person name="Plunkett G. III"/>
            <person name="Mayhew G.F."/>
            <person name="Rose D.J."/>
            <person name="Burland V."/>
            <person name="Kodoyianni V."/>
            <person name="Schwartz D.C."/>
            <person name="Blattner F.R."/>
        </authorList>
    </citation>
    <scope>NUCLEOTIDE SEQUENCE [LARGE SCALE GENOMIC DNA]</scope>
    <source>
        <strain>ATCC 700931 / Ty2</strain>
    </source>
</reference>
<dbReference type="EMBL" id="AL513382">
    <property type="protein sequence ID" value="CAD09374.1"/>
    <property type="molecule type" value="Genomic_DNA"/>
</dbReference>
<dbReference type="EMBL" id="AE014613">
    <property type="protein sequence ID" value="AAO70879.1"/>
    <property type="molecule type" value="Genomic_DNA"/>
</dbReference>
<dbReference type="RefSeq" id="NP_457805.1">
    <property type="nucleotide sequence ID" value="NC_003198.1"/>
</dbReference>
<dbReference type="RefSeq" id="WP_000799903.1">
    <property type="nucleotide sequence ID" value="NZ_WSUR01000033.1"/>
</dbReference>
<dbReference type="STRING" id="220341.gene:17587465"/>
<dbReference type="KEGG" id="stt:t3351"/>
<dbReference type="KEGG" id="sty:STY3613"/>
<dbReference type="PATRIC" id="fig|220341.7.peg.3682"/>
<dbReference type="eggNOG" id="COG5567">
    <property type="taxonomic scope" value="Bacteria"/>
</dbReference>
<dbReference type="HOGENOM" id="CLU_200497_0_0_6"/>
<dbReference type="OMA" id="GFNEMKT"/>
<dbReference type="OrthoDB" id="7066359at2"/>
<dbReference type="Proteomes" id="UP000000541">
    <property type="component" value="Chromosome"/>
</dbReference>
<dbReference type="Proteomes" id="UP000002670">
    <property type="component" value="Chromosome"/>
</dbReference>
<dbReference type="GO" id="GO:0009279">
    <property type="term" value="C:cell outer membrane"/>
    <property type="evidence" value="ECO:0007669"/>
    <property type="project" value="UniProtKB-SubCell"/>
</dbReference>
<dbReference type="InterPro" id="IPR032831">
    <property type="entry name" value="LptM_cons"/>
</dbReference>
<dbReference type="NCBIfam" id="NF047847">
    <property type="entry name" value="SS_mature_LptM"/>
    <property type="match status" value="1"/>
</dbReference>
<dbReference type="Pfam" id="PF13627">
    <property type="entry name" value="LptM_cons"/>
    <property type="match status" value="1"/>
</dbReference>
<dbReference type="PROSITE" id="PS51257">
    <property type="entry name" value="PROKAR_LIPOPROTEIN"/>
    <property type="match status" value="1"/>
</dbReference>
<sequence length="67" mass="7212">MKNVFKTLAVLLTLFSLTGCGLKGPLYFPPADKNAPPPTKKVDSQTQSTMPDKNDRATGDGPSQVNY</sequence>
<gene>
    <name evidence="1" type="primary">lptM</name>
    <name type="synonym">yifL</name>
    <name type="ordered locus">STY3613</name>
    <name type="ordered locus">t3351</name>
</gene>
<accession>P0A1T7</accession>
<accession>Q9L6P7</accession>
<comment type="function">
    <text evidence="1">Component of the lipopolysaccharide (LPS) transport (Lpt) pathway that promotes efficient assembly of the outer membrane LPS translocon (LptDE) by the BAM complex (By similarity). Facilitates oxidative maturation of LptD by stabilizing a conformation of the LPS translocon in which LptD can efficiently acquire native disulfide bonds, thereby activating the LPS translocon (By similarity).</text>
</comment>
<comment type="subunit">
    <text evidence="1">Interacts with the outer membrane embedded portion of the LPS translocon formed by LptD and LptE (LptDE).</text>
</comment>
<comment type="subcellular location">
    <subcellularLocation>
        <location evidence="1">Cell outer membrane</location>
        <topology evidence="2">Lipid-anchor</topology>
    </subcellularLocation>
</comment>
<comment type="similarity">
    <text evidence="4">Belongs to the LptM family.</text>
</comment>
<proteinExistence type="inferred from homology"/>
<name>LPTM_SALTI</name>
<feature type="signal peptide" evidence="2">
    <location>
        <begin position="1"/>
        <end position="19"/>
    </location>
</feature>
<feature type="chain" id="PRO_0000013932" description="LPS-assembly lipoprotein LptM">
    <location>
        <begin position="20"/>
        <end position="67"/>
    </location>
</feature>
<feature type="region of interest" description="Disordered" evidence="3">
    <location>
        <begin position="26"/>
        <end position="67"/>
    </location>
</feature>
<feature type="lipid moiety-binding region" description="N-palmitoyl cysteine" evidence="2">
    <location>
        <position position="20"/>
    </location>
</feature>
<feature type="lipid moiety-binding region" description="S-diacylglycerol cysteine" evidence="2">
    <location>
        <position position="20"/>
    </location>
</feature>